<accession>P11594</accession>
<dbReference type="EMBL" id="X17213">
    <property type="protein sequence ID" value="CAA35081.1"/>
    <property type="molecule type" value="Genomic_DNA"/>
</dbReference>
<dbReference type="EMBL" id="Y07498">
    <property type="protein sequence ID" value="CAA68801.1"/>
    <property type="molecule type" value="mRNA"/>
</dbReference>
<dbReference type="PIR" id="S03888">
    <property type="entry name" value="S03888"/>
</dbReference>
<dbReference type="PIR" id="S10016">
    <property type="entry name" value="S10016"/>
</dbReference>
<dbReference type="SMR" id="P11594"/>
<dbReference type="OrthoDB" id="507333at2759"/>
<dbReference type="GO" id="GO:0009535">
    <property type="term" value="C:chloroplast thylakoid membrane"/>
    <property type="evidence" value="ECO:0007669"/>
    <property type="project" value="UniProtKB-SubCell"/>
</dbReference>
<dbReference type="GO" id="GO:0019898">
    <property type="term" value="C:extrinsic component of membrane"/>
    <property type="evidence" value="ECO:0007669"/>
    <property type="project" value="InterPro"/>
</dbReference>
<dbReference type="GO" id="GO:0009654">
    <property type="term" value="C:photosystem II oxygen evolving complex"/>
    <property type="evidence" value="ECO:0007669"/>
    <property type="project" value="InterPro"/>
</dbReference>
<dbReference type="GO" id="GO:0005509">
    <property type="term" value="F:calcium ion binding"/>
    <property type="evidence" value="ECO:0007669"/>
    <property type="project" value="InterPro"/>
</dbReference>
<dbReference type="GO" id="GO:0015979">
    <property type="term" value="P:photosynthesis"/>
    <property type="evidence" value="ECO:0007669"/>
    <property type="project" value="UniProtKB-KW"/>
</dbReference>
<dbReference type="FunFam" id="3.40.1000.10:FF:000005">
    <property type="entry name" value="Oxygen-evolving enhancer protein 2"/>
    <property type="match status" value="1"/>
</dbReference>
<dbReference type="Gene3D" id="3.40.1000.10">
    <property type="entry name" value="Mog1/PsbP, alpha/beta/alpha sandwich"/>
    <property type="match status" value="1"/>
</dbReference>
<dbReference type="InterPro" id="IPR016123">
    <property type="entry name" value="Mog1/PsbP_a/b/a-sand"/>
</dbReference>
<dbReference type="InterPro" id="IPR002683">
    <property type="entry name" value="PsbP_C"/>
</dbReference>
<dbReference type="PANTHER" id="PTHR31407">
    <property type="match status" value="1"/>
</dbReference>
<dbReference type="PANTHER" id="PTHR31407:SF6">
    <property type="entry name" value="OXYGEN-EVOLVING ENHANCER PROTEIN 2-1, CHLOROPLASTIC"/>
    <property type="match status" value="1"/>
</dbReference>
<dbReference type="Pfam" id="PF01789">
    <property type="entry name" value="PsbP"/>
    <property type="match status" value="1"/>
</dbReference>
<dbReference type="SUPFAM" id="SSF55724">
    <property type="entry name" value="Mog1p/PsbP-like"/>
    <property type="match status" value="1"/>
</dbReference>
<evidence type="ECO:0000250" key="1">
    <source>
        <dbReference type="UniProtKB" id="Q42029"/>
    </source>
</evidence>
<evidence type="ECO:0000305" key="2"/>
<organism>
    <name type="scientific">Sinapis alba</name>
    <name type="common">White mustard</name>
    <name type="synonym">Brassica hirta</name>
    <dbReference type="NCBI Taxonomy" id="3728"/>
    <lineage>
        <taxon>Eukaryota</taxon>
        <taxon>Viridiplantae</taxon>
        <taxon>Streptophyta</taxon>
        <taxon>Embryophyta</taxon>
        <taxon>Tracheophyta</taxon>
        <taxon>Spermatophyta</taxon>
        <taxon>Magnoliopsida</taxon>
        <taxon>eudicotyledons</taxon>
        <taxon>Gunneridae</taxon>
        <taxon>Pentapetalae</taxon>
        <taxon>rosids</taxon>
        <taxon>malvids</taxon>
        <taxon>Brassicales</taxon>
        <taxon>Brassicaceae</taxon>
        <taxon>Brassiceae</taxon>
        <taxon>Sinapis</taxon>
    </lineage>
</organism>
<comment type="function">
    <text>May be involved in the regulation of photosystem II.</text>
</comment>
<comment type="subcellular location">
    <subcellularLocation>
        <location>Plastid</location>
        <location>Chloroplast thylakoid membrane</location>
    </subcellularLocation>
    <text>Associated with the photosystem II complex.</text>
</comment>
<comment type="induction">
    <text>By light.</text>
</comment>
<comment type="similarity">
    <text evidence="2">Belongs to the PsbP family.</text>
</comment>
<sequence>MAYSACFLHQSALASSTARSSPSSSSQRYVSISKLVCKAQQTHEEDNSTVSRRLALTLLVGAAAVGSKVSPADAAYGEAANVFGKPKKNTDFTAYSGDGFQVQVPAKWNPSREVEYPGQVLRYEDNFDATSNLNVMVTPTDKKSITDYGSPEEFLSQVNYLLGKQAYFGETASEGGFDNNAVATANILETNIQDVGGKPYYYLSVLTRTADGDEGGKHQLITATVNGGKLYICKAQAGDKRWFKGANKFVEKAATSFSVA</sequence>
<gene>
    <name type="primary">PSBP</name>
</gene>
<protein>
    <recommendedName>
        <fullName>Oxygen-evolving enhancer protein 2, chloroplastic</fullName>
        <shortName>OEE2</shortName>
    </recommendedName>
    <alternativeName>
        <fullName>23 kDa subunit of oxygen evolving system of photosystem II</fullName>
    </alternativeName>
    <alternativeName>
        <fullName>23 kDa thylakoid membrane protein</fullName>
    </alternativeName>
    <alternativeName>
        <fullName>OEC 23 kDa subunit</fullName>
    </alternativeName>
</protein>
<reference key="1">
    <citation type="journal article" date="1990" name="Plant Mol. Biol.">
        <title>Nucleotide sequence and deduced amino acid sequence of a gene encoding the 23 kDa polypeptide of the oxygen-evolving complex from mustard (Sinapis alba L.).</title>
        <authorList>
            <person name="Merkle T."/>
            <person name="Krenz M."/>
            <person name="Wenng A."/>
            <person name="Schaefer E."/>
        </authorList>
    </citation>
    <scope>NUCLEOTIDE SEQUENCE [GENOMIC DNA]</scope>
    <source>
        <tissue>Seedling</tissue>
    </source>
</reference>
<reference key="2">
    <citation type="journal article" date="1989" name="FEBS Lett.">
        <title>The 23 KDa polypeptide of the photosynthetic oxygen-evolving complex from mustard seedlings (Sinapis alba L.). Nucleotide sequence of cDNA and evidence for phytochrome control of its mRNA abundance.</title>
        <authorList>
            <person name="Wenng A."/>
            <person name="Ehmann B."/>
            <person name="Schaefer E."/>
        </authorList>
    </citation>
    <scope>NUCLEOTIDE SEQUENCE [MRNA] OF 13-260</scope>
    <source>
        <tissue>Seedling</tissue>
    </source>
</reference>
<keyword id="KW-0150">Chloroplast</keyword>
<keyword id="KW-0472">Membrane</keyword>
<keyword id="KW-0597">Phosphoprotein</keyword>
<keyword id="KW-0602">Photosynthesis</keyword>
<keyword id="KW-0604">Photosystem II</keyword>
<keyword id="KW-0934">Plastid</keyword>
<keyword id="KW-0793">Thylakoid</keyword>
<keyword id="KW-0809">Transit peptide</keyword>
<name>PSBP_SINAL</name>
<feature type="transit peptide" description="Chloroplast">
    <location>
        <begin position="1"/>
        <end position="74"/>
    </location>
</feature>
<feature type="chain" id="PRO_0000029580" description="Oxygen-evolving enhancer protein 2, chloroplastic">
    <location>
        <begin position="75"/>
        <end position="260"/>
    </location>
</feature>
<feature type="modified residue" description="Phosphoserine" evidence="1">
    <location>
        <position position="150"/>
    </location>
</feature>
<proteinExistence type="evidence at transcript level"/>